<protein>
    <recommendedName>
        <fullName evidence="1">Large ribosomal subunit protein uL10</fullName>
    </recommendedName>
    <alternativeName>
        <fullName evidence="2">50S ribosomal protein L10</fullName>
    </alternativeName>
</protein>
<organism>
    <name type="scientific">Acidobacterium capsulatum (strain ATCC 51196 / DSM 11244 / BCRC 80197 / JCM 7670 / NBRC 15755 / NCIMB 13165 / 161)</name>
    <dbReference type="NCBI Taxonomy" id="240015"/>
    <lineage>
        <taxon>Bacteria</taxon>
        <taxon>Pseudomonadati</taxon>
        <taxon>Acidobacteriota</taxon>
        <taxon>Terriglobia</taxon>
        <taxon>Terriglobales</taxon>
        <taxon>Acidobacteriaceae</taxon>
        <taxon>Acidobacterium</taxon>
    </lineage>
</organism>
<name>RL10_ACIC5</name>
<comment type="function">
    <text evidence="1">Forms part of the ribosomal stalk, playing a central role in the interaction of the ribosome with GTP-bound translation factors.</text>
</comment>
<comment type="subunit">
    <text evidence="1">Part of the ribosomal stalk of the 50S ribosomal subunit. The N-terminus interacts with L11 and the large rRNA to form the base of the stalk. The C-terminus forms an elongated spine to which L12 dimers bind in a sequential fashion forming a multimeric L10(L12)X complex.</text>
</comment>
<comment type="similarity">
    <text evidence="1">Belongs to the universal ribosomal protein uL10 family.</text>
</comment>
<keyword id="KW-1185">Reference proteome</keyword>
<keyword id="KW-0687">Ribonucleoprotein</keyword>
<keyword id="KW-0689">Ribosomal protein</keyword>
<keyword id="KW-0694">RNA-binding</keyword>
<keyword id="KW-0699">rRNA-binding</keyword>
<dbReference type="EMBL" id="CP001472">
    <property type="protein sequence ID" value="ACO34364.1"/>
    <property type="molecule type" value="Genomic_DNA"/>
</dbReference>
<dbReference type="RefSeq" id="WP_015897976.1">
    <property type="nucleotide sequence ID" value="NC_012483.1"/>
</dbReference>
<dbReference type="SMR" id="C1F3Y1"/>
<dbReference type="FunCoup" id="C1F3Y1">
    <property type="interactions" value="556"/>
</dbReference>
<dbReference type="STRING" id="240015.ACP_2926"/>
<dbReference type="KEGG" id="aca:ACP_2926"/>
<dbReference type="eggNOG" id="COG0244">
    <property type="taxonomic scope" value="Bacteria"/>
</dbReference>
<dbReference type="HOGENOM" id="CLU_092227_2_0_0"/>
<dbReference type="InParanoid" id="C1F3Y1"/>
<dbReference type="OrthoDB" id="9808307at2"/>
<dbReference type="Proteomes" id="UP000002207">
    <property type="component" value="Chromosome"/>
</dbReference>
<dbReference type="GO" id="GO:1990904">
    <property type="term" value="C:ribonucleoprotein complex"/>
    <property type="evidence" value="ECO:0007669"/>
    <property type="project" value="UniProtKB-KW"/>
</dbReference>
<dbReference type="GO" id="GO:0005840">
    <property type="term" value="C:ribosome"/>
    <property type="evidence" value="ECO:0007669"/>
    <property type="project" value="UniProtKB-KW"/>
</dbReference>
<dbReference type="GO" id="GO:0070180">
    <property type="term" value="F:large ribosomal subunit rRNA binding"/>
    <property type="evidence" value="ECO:0007669"/>
    <property type="project" value="UniProtKB-UniRule"/>
</dbReference>
<dbReference type="GO" id="GO:0006412">
    <property type="term" value="P:translation"/>
    <property type="evidence" value="ECO:0007669"/>
    <property type="project" value="UniProtKB-UniRule"/>
</dbReference>
<dbReference type="CDD" id="cd05797">
    <property type="entry name" value="Ribosomal_L10"/>
    <property type="match status" value="1"/>
</dbReference>
<dbReference type="Gene3D" id="3.30.70.1730">
    <property type="match status" value="1"/>
</dbReference>
<dbReference type="Gene3D" id="6.10.250.290">
    <property type="match status" value="1"/>
</dbReference>
<dbReference type="HAMAP" id="MF_00362">
    <property type="entry name" value="Ribosomal_uL10"/>
    <property type="match status" value="1"/>
</dbReference>
<dbReference type="InterPro" id="IPR001790">
    <property type="entry name" value="Ribosomal_uL10"/>
</dbReference>
<dbReference type="InterPro" id="IPR043141">
    <property type="entry name" value="Ribosomal_uL10-like_sf"/>
</dbReference>
<dbReference type="InterPro" id="IPR022973">
    <property type="entry name" value="Ribosomal_uL10_bac"/>
</dbReference>
<dbReference type="InterPro" id="IPR047865">
    <property type="entry name" value="Ribosomal_uL10_bac_type"/>
</dbReference>
<dbReference type="NCBIfam" id="NF000955">
    <property type="entry name" value="PRK00099.1-1"/>
    <property type="match status" value="1"/>
</dbReference>
<dbReference type="PANTHER" id="PTHR11560">
    <property type="entry name" value="39S RIBOSOMAL PROTEIN L10, MITOCHONDRIAL"/>
    <property type="match status" value="1"/>
</dbReference>
<dbReference type="Pfam" id="PF00466">
    <property type="entry name" value="Ribosomal_L10"/>
    <property type="match status" value="1"/>
</dbReference>
<dbReference type="SUPFAM" id="SSF160369">
    <property type="entry name" value="Ribosomal protein L10-like"/>
    <property type="match status" value="1"/>
</dbReference>
<proteinExistence type="inferred from homology"/>
<reference key="1">
    <citation type="journal article" date="2009" name="Appl. Environ. Microbiol.">
        <title>Three genomes from the phylum Acidobacteria provide insight into the lifestyles of these microorganisms in soils.</title>
        <authorList>
            <person name="Ward N.L."/>
            <person name="Challacombe J.F."/>
            <person name="Janssen P.H."/>
            <person name="Henrissat B."/>
            <person name="Coutinho P.M."/>
            <person name="Wu M."/>
            <person name="Xie G."/>
            <person name="Haft D.H."/>
            <person name="Sait M."/>
            <person name="Badger J."/>
            <person name="Barabote R.D."/>
            <person name="Bradley B."/>
            <person name="Brettin T.S."/>
            <person name="Brinkac L.M."/>
            <person name="Bruce D."/>
            <person name="Creasy T."/>
            <person name="Daugherty S.C."/>
            <person name="Davidsen T.M."/>
            <person name="DeBoy R.T."/>
            <person name="Detter J.C."/>
            <person name="Dodson R.J."/>
            <person name="Durkin A.S."/>
            <person name="Ganapathy A."/>
            <person name="Gwinn-Giglio M."/>
            <person name="Han C.S."/>
            <person name="Khouri H."/>
            <person name="Kiss H."/>
            <person name="Kothari S.P."/>
            <person name="Madupu R."/>
            <person name="Nelson K.E."/>
            <person name="Nelson W.C."/>
            <person name="Paulsen I."/>
            <person name="Penn K."/>
            <person name="Ren Q."/>
            <person name="Rosovitz M.J."/>
            <person name="Selengut J.D."/>
            <person name="Shrivastava S."/>
            <person name="Sullivan S.A."/>
            <person name="Tapia R."/>
            <person name="Thompson L.S."/>
            <person name="Watkins K.L."/>
            <person name="Yang Q."/>
            <person name="Yu C."/>
            <person name="Zafar N."/>
            <person name="Zhou L."/>
            <person name="Kuske C.R."/>
        </authorList>
    </citation>
    <scope>NUCLEOTIDE SEQUENCE [LARGE SCALE GENOMIC DNA]</scope>
    <source>
        <strain>ATCC 51196 / DSM 11244 / BCRC 80197 / JCM 7670 / NBRC 15755 / NCIMB 13165 / 161</strain>
    </source>
</reference>
<sequence length="181" mass="19409">MALTKARKAERIETLAKELEHSTSAIIGTFAKLTVSQDFELRQKVRAAGGRYRVVKNKLAARASKGTQIEAALQGLKGVSSVAYTSGDPVALAKAMADWVKENAEFTFKLGIVDGKVITVEEVDQLAKMPGKEEIFSKLLYLINAPAQRLATVMAATGRDLAVVINQGVEKGKFSGEQASA</sequence>
<feature type="chain" id="PRO_1000195519" description="Large ribosomal subunit protein uL10">
    <location>
        <begin position="1"/>
        <end position="181"/>
    </location>
</feature>
<accession>C1F3Y1</accession>
<evidence type="ECO:0000255" key="1">
    <source>
        <dbReference type="HAMAP-Rule" id="MF_00362"/>
    </source>
</evidence>
<evidence type="ECO:0000305" key="2"/>
<gene>
    <name evidence="1" type="primary">rplJ</name>
    <name type="ordered locus">ACP_2926</name>
</gene>